<keyword id="KW-0687">Ribonucleoprotein</keyword>
<keyword id="KW-0689">Ribosomal protein</keyword>
<evidence type="ECO:0000255" key="1">
    <source>
        <dbReference type="HAMAP-Rule" id="MF_01371"/>
    </source>
</evidence>
<evidence type="ECO:0000305" key="2"/>
<gene>
    <name evidence="1" type="primary">rpmD</name>
    <name type="ordered locus">MUL_0812</name>
</gene>
<protein>
    <recommendedName>
        <fullName evidence="1">Large ribosomal subunit protein uL30</fullName>
    </recommendedName>
    <alternativeName>
        <fullName evidence="2">50S ribosomal protein L30</fullName>
    </alternativeName>
</protein>
<feature type="chain" id="PRO_0000347123" description="Large ribosomal subunit protein uL30">
    <location>
        <begin position="1"/>
        <end position="72"/>
    </location>
</feature>
<dbReference type="EMBL" id="CP000325">
    <property type="protein sequence ID" value="ABL03452.1"/>
    <property type="molecule type" value="Genomic_DNA"/>
</dbReference>
<dbReference type="RefSeq" id="WP_011739077.1">
    <property type="nucleotide sequence ID" value="NC_008611.1"/>
</dbReference>
<dbReference type="SMR" id="A0PM83"/>
<dbReference type="GeneID" id="34342253"/>
<dbReference type="KEGG" id="mul:MUL_0812"/>
<dbReference type="eggNOG" id="COG1841">
    <property type="taxonomic scope" value="Bacteria"/>
</dbReference>
<dbReference type="HOGENOM" id="CLU_131047_2_0_11"/>
<dbReference type="Proteomes" id="UP000000765">
    <property type="component" value="Chromosome"/>
</dbReference>
<dbReference type="GO" id="GO:0022625">
    <property type="term" value="C:cytosolic large ribosomal subunit"/>
    <property type="evidence" value="ECO:0007669"/>
    <property type="project" value="TreeGrafter"/>
</dbReference>
<dbReference type="GO" id="GO:0003735">
    <property type="term" value="F:structural constituent of ribosome"/>
    <property type="evidence" value="ECO:0007669"/>
    <property type="project" value="InterPro"/>
</dbReference>
<dbReference type="GO" id="GO:0006412">
    <property type="term" value="P:translation"/>
    <property type="evidence" value="ECO:0007669"/>
    <property type="project" value="UniProtKB-UniRule"/>
</dbReference>
<dbReference type="CDD" id="cd01658">
    <property type="entry name" value="Ribosomal_L30"/>
    <property type="match status" value="1"/>
</dbReference>
<dbReference type="FunFam" id="3.30.1390.20:FF:000001">
    <property type="entry name" value="50S ribosomal protein L30"/>
    <property type="match status" value="1"/>
</dbReference>
<dbReference type="Gene3D" id="3.30.1390.20">
    <property type="entry name" value="Ribosomal protein L30, ferredoxin-like fold domain"/>
    <property type="match status" value="1"/>
</dbReference>
<dbReference type="HAMAP" id="MF_01371_B">
    <property type="entry name" value="Ribosomal_uL30_B"/>
    <property type="match status" value="1"/>
</dbReference>
<dbReference type="InterPro" id="IPR036919">
    <property type="entry name" value="Ribo_uL30_ferredoxin-like_sf"/>
</dbReference>
<dbReference type="InterPro" id="IPR005996">
    <property type="entry name" value="Ribosomal_uL30_bac-type"/>
</dbReference>
<dbReference type="InterPro" id="IPR018038">
    <property type="entry name" value="Ribosomal_uL30_CS"/>
</dbReference>
<dbReference type="InterPro" id="IPR016082">
    <property type="entry name" value="Ribosomal_uL30_ferredoxin-like"/>
</dbReference>
<dbReference type="NCBIfam" id="TIGR01308">
    <property type="entry name" value="rpmD_bact"/>
    <property type="match status" value="1"/>
</dbReference>
<dbReference type="PANTHER" id="PTHR15892:SF2">
    <property type="entry name" value="LARGE RIBOSOMAL SUBUNIT PROTEIN UL30M"/>
    <property type="match status" value="1"/>
</dbReference>
<dbReference type="PANTHER" id="PTHR15892">
    <property type="entry name" value="MITOCHONDRIAL RIBOSOMAL PROTEIN L30"/>
    <property type="match status" value="1"/>
</dbReference>
<dbReference type="Pfam" id="PF00327">
    <property type="entry name" value="Ribosomal_L30"/>
    <property type="match status" value="1"/>
</dbReference>
<dbReference type="PIRSF" id="PIRSF002211">
    <property type="entry name" value="Ribosomal_L30_bac-type"/>
    <property type="match status" value="1"/>
</dbReference>
<dbReference type="SUPFAM" id="SSF55129">
    <property type="entry name" value="Ribosomal protein L30p/L7e"/>
    <property type="match status" value="1"/>
</dbReference>
<dbReference type="PROSITE" id="PS00634">
    <property type="entry name" value="RIBOSOMAL_L30"/>
    <property type="match status" value="1"/>
</dbReference>
<name>RL30_MYCUA</name>
<sequence>MSEATNQLKITQVRSTIGARWKQRESLRTLGLRRIRHTVVRDDNAQTRGLIAVVRHLVEVEPAQNGTGGKAQ</sequence>
<accession>A0PM83</accession>
<proteinExistence type="inferred from homology"/>
<reference key="1">
    <citation type="journal article" date="2007" name="Genome Res.">
        <title>Reductive evolution and niche adaptation inferred from the genome of Mycobacterium ulcerans, the causative agent of Buruli ulcer.</title>
        <authorList>
            <person name="Stinear T.P."/>
            <person name="Seemann T."/>
            <person name="Pidot S."/>
            <person name="Frigui W."/>
            <person name="Reysset G."/>
            <person name="Garnier T."/>
            <person name="Meurice G."/>
            <person name="Simon D."/>
            <person name="Bouchier C."/>
            <person name="Ma L."/>
            <person name="Tichit M."/>
            <person name="Porter J.L."/>
            <person name="Ryan J."/>
            <person name="Johnson P.D.R."/>
            <person name="Davies J.K."/>
            <person name="Jenkin G.A."/>
            <person name="Small P.L.C."/>
            <person name="Jones L.M."/>
            <person name="Tekaia F."/>
            <person name="Laval F."/>
            <person name="Daffe M."/>
            <person name="Parkhill J."/>
            <person name="Cole S.T."/>
        </authorList>
    </citation>
    <scope>NUCLEOTIDE SEQUENCE [LARGE SCALE GENOMIC DNA]</scope>
    <source>
        <strain>Agy99</strain>
    </source>
</reference>
<comment type="subunit">
    <text evidence="1">Part of the 50S ribosomal subunit.</text>
</comment>
<comment type="similarity">
    <text evidence="1">Belongs to the universal ribosomal protein uL30 family.</text>
</comment>
<organism>
    <name type="scientific">Mycobacterium ulcerans (strain Agy99)</name>
    <dbReference type="NCBI Taxonomy" id="362242"/>
    <lineage>
        <taxon>Bacteria</taxon>
        <taxon>Bacillati</taxon>
        <taxon>Actinomycetota</taxon>
        <taxon>Actinomycetes</taxon>
        <taxon>Mycobacteriales</taxon>
        <taxon>Mycobacteriaceae</taxon>
        <taxon>Mycobacterium</taxon>
        <taxon>Mycobacterium ulcerans group</taxon>
    </lineage>
</organism>